<organism>
    <name type="scientific">Escherichia coli (strain 55989 / EAEC)</name>
    <dbReference type="NCBI Taxonomy" id="585055"/>
    <lineage>
        <taxon>Bacteria</taxon>
        <taxon>Pseudomonadati</taxon>
        <taxon>Pseudomonadota</taxon>
        <taxon>Gammaproteobacteria</taxon>
        <taxon>Enterobacterales</taxon>
        <taxon>Enterobacteriaceae</taxon>
        <taxon>Escherichia</taxon>
    </lineage>
</organism>
<feature type="chain" id="PRO_1000147304" description="Nucleotide-binding protein YajQ">
    <location>
        <begin position="1"/>
        <end position="163"/>
    </location>
</feature>
<reference key="1">
    <citation type="journal article" date="2009" name="PLoS Genet.">
        <title>Organised genome dynamics in the Escherichia coli species results in highly diverse adaptive paths.</title>
        <authorList>
            <person name="Touchon M."/>
            <person name="Hoede C."/>
            <person name="Tenaillon O."/>
            <person name="Barbe V."/>
            <person name="Baeriswyl S."/>
            <person name="Bidet P."/>
            <person name="Bingen E."/>
            <person name="Bonacorsi S."/>
            <person name="Bouchier C."/>
            <person name="Bouvet O."/>
            <person name="Calteau A."/>
            <person name="Chiapello H."/>
            <person name="Clermont O."/>
            <person name="Cruveiller S."/>
            <person name="Danchin A."/>
            <person name="Diard M."/>
            <person name="Dossat C."/>
            <person name="Karoui M.E."/>
            <person name="Frapy E."/>
            <person name="Garry L."/>
            <person name="Ghigo J.M."/>
            <person name="Gilles A.M."/>
            <person name="Johnson J."/>
            <person name="Le Bouguenec C."/>
            <person name="Lescat M."/>
            <person name="Mangenot S."/>
            <person name="Martinez-Jehanne V."/>
            <person name="Matic I."/>
            <person name="Nassif X."/>
            <person name="Oztas S."/>
            <person name="Petit M.A."/>
            <person name="Pichon C."/>
            <person name="Rouy Z."/>
            <person name="Ruf C.S."/>
            <person name="Schneider D."/>
            <person name="Tourret J."/>
            <person name="Vacherie B."/>
            <person name="Vallenet D."/>
            <person name="Medigue C."/>
            <person name="Rocha E.P.C."/>
            <person name="Denamur E."/>
        </authorList>
    </citation>
    <scope>NUCLEOTIDE SEQUENCE [LARGE SCALE GENOMIC DNA]</scope>
    <source>
        <strain>55989 / EAEC</strain>
    </source>
</reference>
<protein>
    <recommendedName>
        <fullName evidence="1">Nucleotide-binding protein YajQ</fullName>
    </recommendedName>
</protein>
<keyword id="KW-0547">Nucleotide-binding</keyword>
<keyword id="KW-1185">Reference proteome</keyword>
<name>YAJQ_ECO55</name>
<sequence length="163" mass="18344">MPSFDIVSEVDLQEARNAVDNASREVESRFDFRNVEASFELNDASKTIKVLSESDFQVNQLLDILRAKLLKRGIEGSSLDVPENIVHSGKTWFVEAKLKQGIESATQKKIVKMIKDSKLKVQAQIQGDEIRVTGKSRDDLQAVMAMVRGGDLGQPFQFKNFRD</sequence>
<comment type="function">
    <text evidence="1">Nucleotide-binding protein.</text>
</comment>
<comment type="similarity">
    <text evidence="1">Belongs to the YajQ family.</text>
</comment>
<evidence type="ECO:0000255" key="1">
    <source>
        <dbReference type="HAMAP-Rule" id="MF_00632"/>
    </source>
</evidence>
<accession>B7L660</accession>
<gene>
    <name evidence="1" type="primary">yajQ</name>
    <name type="ordered locus">EC55989_0437</name>
</gene>
<proteinExistence type="inferred from homology"/>
<dbReference type="EMBL" id="CU928145">
    <property type="protein sequence ID" value="CAU96310.1"/>
    <property type="molecule type" value="Genomic_DNA"/>
</dbReference>
<dbReference type="RefSeq" id="WP_001138904.1">
    <property type="nucleotide sequence ID" value="NZ_CP028304.1"/>
</dbReference>
<dbReference type="SMR" id="B7L660"/>
<dbReference type="GeneID" id="93777034"/>
<dbReference type="KEGG" id="eck:EC55989_0437"/>
<dbReference type="HOGENOM" id="CLU_099839_1_0_6"/>
<dbReference type="Proteomes" id="UP000000746">
    <property type="component" value="Chromosome"/>
</dbReference>
<dbReference type="GO" id="GO:0005829">
    <property type="term" value="C:cytosol"/>
    <property type="evidence" value="ECO:0007669"/>
    <property type="project" value="TreeGrafter"/>
</dbReference>
<dbReference type="GO" id="GO:0000166">
    <property type="term" value="F:nucleotide binding"/>
    <property type="evidence" value="ECO:0007669"/>
    <property type="project" value="TreeGrafter"/>
</dbReference>
<dbReference type="CDD" id="cd11740">
    <property type="entry name" value="YajQ_like"/>
    <property type="match status" value="1"/>
</dbReference>
<dbReference type="FunFam" id="3.30.70.860:FF:000001">
    <property type="entry name" value="UPF0234 protein YajQ"/>
    <property type="match status" value="1"/>
</dbReference>
<dbReference type="FunFam" id="3.30.70.990:FF:000001">
    <property type="entry name" value="UPF0234 protein YajQ"/>
    <property type="match status" value="1"/>
</dbReference>
<dbReference type="Gene3D" id="3.30.70.860">
    <property type="match status" value="1"/>
</dbReference>
<dbReference type="Gene3D" id="3.30.70.990">
    <property type="entry name" value="YajQ-like, domain 2"/>
    <property type="match status" value="1"/>
</dbReference>
<dbReference type="HAMAP" id="MF_00632">
    <property type="entry name" value="YajQ"/>
    <property type="match status" value="1"/>
</dbReference>
<dbReference type="InterPro" id="IPR007551">
    <property type="entry name" value="DUF520"/>
</dbReference>
<dbReference type="InterPro" id="IPR035571">
    <property type="entry name" value="UPF0234-like_C"/>
</dbReference>
<dbReference type="InterPro" id="IPR035570">
    <property type="entry name" value="UPF0234_N"/>
</dbReference>
<dbReference type="InterPro" id="IPR036183">
    <property type="entry name" value="YajQ-like_sf"/>
</dbReference>
<dbReference type="NCBIfam" id="NF003819">
    <property type="entry name" value="PRK05412.1"/>
    <property type="match status" value="1"/>
</dbReference>
<dbReference type="PANTHER" id="PTHR30476">
    <property type="entry name" value="UPF0234 PROTEIN YAJQ"/>
    <property type="match status" value="1"/>
</dbReference>
<dbReference type="PANTHER" id="PTHR30476:SF0">
    <property type="entry name" value="UPF0234 PROTEIN YAJQ"/>
    <property type="match status" value="1"/>
</dbReference>
<dbReference type="Pfam" id="PF04461">
    <property type="entry name" value="DUF520"/>
    <property type="match status" value="1"/>
</dbReference>
<dbReference type="SUPFAM" id="SSF89963">
    <property type="entry name" value="YajQ-like"/>
    <property type="match status" value="2"/>
</dbReference>